<reference key="1">
    <citation type="journal article" date="2009" name="BMC Genomics">
        <title>Evidence for niche adaptation in the genome of the bovine pathogen Streptococcus uberis.</title>
        <authorList>
            <person name="Ward P.N."/>
            <person name="Holden M.T.G."/>
            <person name="Leigh J.A."/>
            <person name="Lennard N."/>
            <person name="Bignell A."/>
            <person name="Barron A."/>
            <person name="Clark L."/>
            <person name="Quail M.A."/>
            <person name="Woodward J."/>
            <person name="Barrell B.G."/>
            <person name="Egan S.A."/>
            <person name="Field T.R."/>
            <person name="Maskell D."/>
            <person name="Kehoe M."/>
            <person name="Dowson C.G."/>
            <person name="Chanter N."/>
            <person name="Whatmore A.M."/>
            <person name="Bentley S.D."/>
            <person name="Parkhill J."/>
        </authorList>
    </citation>
    <scope>NUCLEOTIDE SEQUENCE [LARGE SCALE GENOMIC DNA]</scope>
    <source>
        <strain>ATCC BAA-854 / 0140J</strain>
    </source>
</reference>
<evidence type="ECO:0000255" key="1">
    <source>
        <dbReference type="HAMAP-Rule" id="MF_01554"/>
    </source>
</evidence>
<accession>B9DSE8</accession>
<keyword id="KW-0413">Isomerase</keyword>
<keyword id="KW-0460">Magnesium</keyword>
<keyword id="KW-0479">Metal-binding</keyword>
<keyword id="KW-0597">Phosphoprotein</keyword>
<keyword id="KW-1185">Reference proteome</keyword>
<sequence>MGKYFGTDGVRGEANVELTPELAFKLGRFGGYVLSQHETGTPRVFVARDTRISGEMLESALVAGLLSVGIEVYKLGVLATPGVSYLVRTENASAGVMISASHNPALDNGIKFFGSDGFKLADDQELEIEALLDAEEDTLPRPSAEGLGTLVDYPEGLRKYEKFLVSTGINLEGMKVALDTANGAASVSARDVFLDLQADISVIGEQPNGLNINDGIGSTHPEKLQELVKETGSAVGLAFDGDSDRLIAVDENGDIVDGDKIMFIIGKYLSEKGLLAQNTIVTTVMSNLGFHKALDQHGINKAVTAVGDRYVVEEMRQSNYNLGGEQSGHVIIMDYNTTGDGQLTAIQLTKVMKETGMSLSELAAQVTIYPQKLVNIRVDNSMKHKAMEVPAIAAIIEKMEAEMQGNGRILVRPSGTEPLLRVMAEAPTDEEVDYYVDTIADVVRTEIGIA</sequence>
<name>GLMM_STRU0</name>
<proteinExistence type="inferred from homology"/>
<feature type="chain" id="PRO_1000185386" description="Phosphoglucosamine mutase">
    <location>
        <begin position="1"/>
        <end position="450"/>
    </location>
</feature>
<feature type="active site" description="Phosphoserine intermediate" evidence="1">
    <location>
        <position position="101"/>
    </location>
</feature>
<feature type="binding site" description="via phosphate group" evidence="1">
    <location>
        <position position="101"/>
    </location>
    <ligand>
        <name>Mg(2+)</name>
        <dbReference type="ChEBI" id="CHEBI:18420"/>
    </ligand>
</feature>
<feature type="binding site" evidence="1">
    <location>
        <position position="240"/>
    </location>
    <ligand>
        <name>Mg(2+)</name>
        <dbReference type="ChEBI" id="CHEBI:18420"/>
    </ligand>
</feature>
<feature type="binding site" evidence="1">
    <location>
        <position position="242"/>
    </location>
    <ligand>
        <name>Mg(2+)</name>
        <dbReference type="ChEBI" id="CHEBI:18420"/>
    </ligand>
</feature>
<feature type="binding site" evidence="1">
    <location>
        <position position="244"/>
    </location>
    <ligand>
        <name>Mg(2+)</name>
        <dbReference type="ChEBI" id="CHEBI:18420"/>
    </ligand>
</feature>
<feature type="modified residue" description="Phosphoserine" evidence="1">
    <location>
        <position position="101"/>
    </location>
</feature>
<comment type="function">
    <text evidence="1">Catalyzes the conversion of glucosamine-6-phosphate to glucosamine-1-phosphate.</text>
</comment>
<comment type="catalytic activity">
    <reaction evidence="1">
        <text>alpha-D-glucosamine 1-phosphate = D-glucosamine 6-phosphate</text>
        <dbReference type="Rhea" id="RHEA:23424"/>
        <dbReference type="ChEBI" id="CHEBI:58516"/>
        <dbReference type="ChEBI" id="CHEBI:58725"/>
        <dbReference type="EC" id="5.4.2.10"/>
    </reaction>
</comment>
<comment type="cofactor">
    <cofactor evidence="1">
        <name>Mg(2+)</name>
        <dbReference type="ChEBI" id="CHEBI:18420"/>
    </cofactor>
    <text evidence="1">Binds 1 Mg(2+) ion per subunit.</text>
</comment>
<comment type="PTM">
    <text evidence="1">Activated by phosphorylation.</text>
</comment>
<comment type="similarity">
    <text evidence="1">Belongs to the phosphohexose mutase family.</text>
</comment>
<gene>
    <name evidence="1" type="primary">glmM</name>
    <name type="ordered locus">SUB1090</name>
</gene>
<dbReference type="EC" id="5.4.2.10" evidence="1"/>
<dbReference type="EMBL" id="AM946015">
    <property type="protein sequence ID" value="CAR42406.1"/>
    <property type="molecule type" value="Genomic_DNA"/>
</dbReference>
<dbReference type="RefSeq" id="WP_012658579.1">
    <property type="nucleotide sequence ID" value="NC_012004.1"/>
</dbReference>
<dbReference type="SMR" id="B9DSE8"/>
<dbReference type="STRING" id="218495.SUB1090"/>
<dbReference type="KEGG" id="sub:SUB1090"/>
<dbReference type="eggNOG" id="COG1109">
    <property type="taxonomic scope" value="Bacteria"/>
</dbReference>
<dbReference type="HOGENOM" id="CLU_016950_7_0_9"/>
<dbReference type="OrthoDB" id="9806956at2"/>
<dbReference type="Proteomes" id="UP000000449">
    <property type="component" value="Chromosome"/>
</dbReference>
<dbReference type="GO" id="GO:0005829">
    <property type="term" value="C:cytosol"/>
    <property type="evidence" value="ECO:0007669"/>
    <property type="project" value="TreeGrafter"/>
</dbReference>
<dbReference type="GO" id="GO:0000287">
    <property type="term" value="F:magnesium ion binding"/>
    <property type="evidence" value="ECO:0007669"/>
    <property type="project" value="UniProtKB-UniRule"/>
</dbReference>
<dbReference type="GO" id="GO:0008966">
    <property type="term" value="F:phosphoglucosamine mutase activity"/>
    <property type="evidence" value="ECO:0007669"/>
    <property type="project" value="UniProtKB-UniRule"/>
</dbReference>
<dbReference type="GO" id="GO:0004615">
    <property type="term" value="F:phosphomannomutase activity"/>
    <property type="evidence" value="ECO:0007669"/>
    <property type="project" value="TreeGrafter"/>
</dbReference>
<dbReference type="GO" id="GO:0005975">
    <property type="term" value="P:carbohydrate metabolic process"/>
    <property type="evidence" value="ECO:0007669"/>
    <property type="project" value="InterPro"/>
</dbReference>
<dbReference type="GO" id="GO:0009252">
    <property type="term" value="P:peptidoglycan biosynthetic process"/>
    <property type="evidence" value="ECO:0007669"/>
    <property type="project" value="TreeGrafter"/>
</dbReference>
<dbReference type="GO" id="GO:0006048">
    <property type="term" value="P:UDP-N-acetylglucosamine biosynthetic process"/>
    <property type="evidence" value="ECO:0007669"/>
    <property type="project" value="TreeGrafter"/>
</dbReference>
<dbReference type="CDD" id="cd05802">
    <property type="entry name" value="GlmM"/>
    <property type="match status" value="1"/>
</dbReference>
<dbReference type="FunFam" id="3.30.310.50:FF:000001">
    <property type="entry name" value="Phosphoglucosamine mutase"/>
    <property type="match status" value="1"/>
</dbReference>
<dbReference type="FunFam" id="3.40.120.10:FF:000001">
    <property type="entry name" value="Phosphoglucosamine mutase"/>
    <property type="match status" value="1"/>
</dbReference>
<dbReference type="FunFam" id="3.40.120.10:FF:000002">
    <property type="entry name" value="Phosphoglucosamine mutase"/>
    <property type="match status" value="1"/>
</dbReference>
<dbReference type="Gene3D" id="3.40.120.10">
    <property type="entry name" value="Alpha-D-Glucose-1,6-Bisphosphate, subunit A, domain 3"/>
    <property type="match status" value="3"/>
</dbReference>
<dbReference type="Gene3D" id="3.30.310.50">
    <property type="entry name" value="Alpha-D-phosphohexomutase, C-terminal domain"/>
    <property type="match status" value="1"/>
</dbReference>
<dbReference type="HAMAP" id="MF_01554_B">
    <property type="entry name" value="GlmM_B"/>
    <property type="match status" value="1"/>
</dbReference>
<dbReference type="InterPro" id="IPR005844">
    <property type="entry name" value="A-D-PHexomutase_a/b/a-I"/>
</dbReference>
<dbReference type="InterPro" id="IPR016055">
    <property type="entry name" value="A-D-PHexomutase_a/b/a-I/II/III"/>
</dbReference>
<dbReference type="InterPro" id="IPR005845">
    <property type="entry name" value="A-D-PHexomutase_a/b/a-II"/>
</dbReference>
<dbReference type="InterPro" id="IPR005846">
    <property type="entry name" value="A-D-PHexomutase_a/b/a-III"/>
</dbReference>
<dbReference type="InterPro" id="IPR005843">
    <property type="entry name" value="A-D-PHexomutase_C"/>
</dbReference>
<dbReference type="InterPro" id="IPR036900">
    <property type="entry name" value="A-D-PHexomutase_C_sf"/>
</dbReference>
<dbReference type="InterPro" id="IPR016066">
    <property type="entry name" value="A-D-PHexomutase_CS"/>
</dbReference>
<dbReference type="InterPro" id="IPR005841">
    <property type="entry name" value="Alpha-D-phosphohexomutase_SF"/>
</dbReference>
<dbReference type="InterPro" id="IPR006352">
    <property type="entry name" value="GlmM_bact"/>
</dbReference>
<dbReference type="InterPro" id="IPR050060">
    <property type="entry name" value="Phosphoglucosamine_mutase"/>
</dbReference>
<dbReference type="NCBIfam" id="TIGR01455">
    <property type="entry name" value="glmM"/>
    <property type="match status" value="1"/>
</dbReference>
<dbReference type="PANTHER" id="PTHR42946:SF1">
    <property type="entry name" value="PHOSPHOGLUCOMUTASE (ALPHA-D-GLUCOSE-1,6-BISPHOSPHATE-DEPENDENT)"/>
    <property type="match status" value="1"/>
</dbReference>
<dbReference type="PANTHER" id="PTHR42946">
    <property type="entry name" value="PHOSPHOHEXOSE MUTASE"/>
    <property type="match status" value="1"/>
</dbReference>
<dbReference type="Pfam" id="PF02878">
    <property type="entry name" value="PGM_PMM_I"/>
    <property type="match status" value="1"/>
</dbReference>
<dbReference type="Pfam" id="PF02879">
    <property type="entry name" value="PGM_PMM_II"/>
    <property type="match status" value="1"/>
</dbReference>
<dbReference type="Pfam" id="PF02880">
    <property type="entry name" value="PGM_PMM_III"/>
    <property type="match status" value="1"/>
</dbReference>
<dbReference type="Pfam" id="PF00408">
    <property type="entry name" value="PGM_PMM_IV"/>
    <property type="match status" value="1"/>
</dbReference>
<dbReference type="PRINTS" id="PR00509">
    <property type="entry name" value="PGMPMM"/>
</dbReference>
<dbReference type="SUPFAM" id="SSF55957">
    <property type="entry name" value="Phosphoglucomutase, C-terminal domain"/>
    <property type="match status" value="1"/>
</dbReference>
<dbReference type="SUPFAM" id="SSF53738">
    <property type="entry name" value="Phosphoglucomutase, first 3 domains"/>
    <property type="match status" value="3"/>
</dbReference>
<dbReference type="PROSITE" id="PS00710">
    <property type="entry name" value="PGM_PMM"/>
    <property type="match status" value="1"/>
</dbReference>
<organism>
    <name type="scientific">Streptococcus uberis (strain ATCC BAA-854 / 0140J)</name>
    <dbReference type="NCBI Taxonomy" id="218495"/>
    <lineage>
        <taxon>Bacteria</taxon>
        <taxon>Bacillati</taxon>
        <taxon>Bacillota</taxon>
        <taxon>Bacilli</taxon>
        <taxon>Lactobacillales</taxon>
        <taxon>Streptococcaceae</taxon>
        <taxon>Streptococcus</taxon>
    </lineage>
</organism>
<protein>
    <recommendedName>
        <fullName evidence="1">Phosphoglucosamine mutase</fullName>
        <ecNumber evidence="1">5.4.2.10</ecNumber>
    </recommendedName>
</protein>